<comment type="function">
    <text evidence="1">Required for 60S pre-ribosomal subunits export to the cytoplasm.</text>
</comment>
<comment type="subcellular location">
    <subcellularLocation>
        <location evidence="1">Nucleus</location>
        <location evidence="1">Nucleolus</location>
    </subcellularLocation>
</comment>
<comment type="alternative products">
    <event type="alternative splicing"/>
    <isoform>
        <id>Q80UZ2-1</id>
        <name>1</name>
        <sequence type="displayed"/>
    </isoform>
    <isoform>
        <id>Q80UZ2-2</id>
        <name>2</name>
        <sequence type="described" ref="VSP_025508"/>
    </isoform>
    <isoform>
        <id>Q80UZ2-3</id>
        <name>3</name>
        <sequence type="described" ref="VSP_025506 VSP_025507"/>
    </isoform>
</comment>
<comment type="similarity">
    <text evidence="6">Belongs to the SDA1 family.</text>
</comment>
<keyword id="KW-0025">Alternative splicing</keyword>
<keyword id="KW-0175">Coiled coil</keyword>
<keyword id="KW-0539">Nucleus</keyword>
<keyword id="KW-0597">Phosphoprotein</keyword>
<keyword id="KW-0653">Protein transport</keyword>
<keyword id="KW-1185">Reference proteome</keyword>
<keyword id="KW-0690">Ribosome biogenesis</keyword>
<keyword id="KW-0813">Transport</keyword>
<protein>
    <recommendedName>
        <fullName>Protein SDA1 homolog</fullName>
    </recommendedName>
    <alternativeName>
        <fullName>SDA1 domain-containing protein 1</fullName>
    </alternativeName>
</protein>
<feature type="chain" id="PRO_0000287483" description="Protein SDA1 homolog">
    <location>
        <begin position="1"/>
        <end position="687"/>
    </location>
</feature>
<feature type="region of interest" description="Disordered" evidence="4">
    <location>
        <begin position="484"/>
        <end position="509"/>
    </location>
</feature>
<feature type="region of interest" description="Disordered" evidence="4">
    <location>
        <begin position="604"/>
        <end position="651"/>
    </location>
</feature>
<feature type="coiled-coil region" evidence="3">
    <location>
        <begin position="254"/>
        <end position="315"/>
    </location>
</feature>
<feature type="compositionally biased region" description="Acidic residues" evidence="4">
    <location>
        <begin position="490"/>
        <end position="509"/>
    </location>
</feature>
<feature type="modified residue" description="Phosphoserine" evidence="2">
    <location>
        <position position="232"/>
    </location>
</feature>
<feature type="modified residue" description="Phosphoserine" evidence="2">
    <location>
        <position position="234"/>
    </location>
</feature>
<feature type="modified residue" description="Phosphoserine" evidence="2">
    <location>
        <position position="236"/>
    </location>
</feature>
<feature type="modified residue" description="Phosphothreonine" evidence="2">
    <location>
        <position position="552"/>
    </location>
</feature>
<feature type="modified residue" description="Phosphoserine" evidence="7 8 9">
    <location>
        <position position="585"/>
    </location>
</feature>
<feature type="modified residue" description="Phosphoserine" evidence="9">
    <location>
        <position position="589"/>
    </location>
</feature>
<feature type="modified residue" description="Phosphoserine" evidence="2">
    <location>
        <position position="595"/>
    </location>
</feature>
<feature type="splice variant" id="VSP_025506" description="In isoform 3." evidence="5">
    <original>DD</original>
    <variation>VG</variation>
    <location>
        <begin position="238"/>
        <end position="239"/>
    </location>
</feature>
<feature type="splice variant" id="VSP_025507" description="In isoform 3." evidence="5">
    <location>
        <begin position="240"/>
        <end position="687"/>
    </location>
</feature>
<feature type="splice variant" id="VSP_025508" description="In isoform 2." evidence="5">
    <location>
        <position position="271"/>
    </location>
</feature>
<feature type="sequence conflict" description="In Ref. 1; BAC26657/BAE35938." evidence="6" ref="1">
    <original>D</original>
    <variation>E</variation>
    <location>
        <position position="238"/>
    </location>
</feature>
<feature type="sequence conflict" description="In Ref. 1; BAC26657/BAE35938." evidence="6" ref="1">
    <original>E</original>
    <variation>D</variation>
    <location>
        <position position="488"/>
    </location>
</feature>
<feature type="sequence conflict" description="In Ref. 1; BAC26657." evidence="6" ref="1">
    <original>S</original>
    <variation>T</variation>
    <location>
        <position position="664"/>
    </location>
</feature>
<feature type="sequence conflict" description="In Ref. 1; BAC26657." evidence="6" ref="1">
    <original>D</original>
    <variation>E</variation>
    <location>
        <position position="670"/>
    </location>
</feature>
<gene>
    <name type="primary">Sdad1</name>
</gene>
<organism>
    <name type="scientific">Mus musculus</name>
    <name type="common">Mouse</name>
    <dbReference type="NCBI Taxonomy" id="10090"/>
    <lineage>
        <taxon>Eukaryota</taxon>
        <taxon>Metazoa</taxon>
        <taxon>Chordata</taxon>
        <taxon>Craniata</taxon>
        <taxon>Vertebrata</taxon>
        <taxon>Euteleostomi</taxon>
        <taxon>Mammalia</taxon>
        <taxon>Eutheria</taxon>
        <taxon>Euarchontoglires</taxon>
        <taxon>Glires</taxon>
        <taxon>Rodentia</taxon>
        <taxon>Myomorpha</taxon>
        <taxon>Muroidea</taxon>
        <taxon>Muridae</taxon>
        <taxon>Murinae</taxon>
        <taxon>Mus</taxon>
        <taxon>Mus</taxon>
    </lineage>
</organism>
<sequence length="687" mass="79559">MSGRNNNKLPSNLPQLQNLIKRDPPAYVEEFLQQYNHYKSNMEIFKLQPNKPSKELAELVMFMAQIGQCYPEHLSNFPQELKDLLSYNHTVLDPDLRMTFCKALILLRNKNLINPSSLLELFFELLRCHDKLLRKTLYTHIVTDIKNINAKHKNNKVNVVLQNFMYTMLRDSNATAAKMSLDVMIELYRRNIWNDAKTVNVITTACFSKITKILVAALTFFLGKDEEEKQDSDSESEDDGPTARDLLVQYATGKKGSKNKKKLEKAMKVLKKQKKKKKPEVFNFSAIHLIHDPQDFAEKLLKQLESCKERFEVKMMLMNLISRLVGIHELFLFNFYPFVQRFLQPHQREVTKILLFAAQASHHLVPPEIIQSLLVTVANNFVTDKNSGEVMTVGINAIKEITARCPLAMTEELLQDLAQYKTHKDKNVMMSARTLIHLFRTLNPQMLQKKFRGKPTEASIEARIQEYGELDAKDYIPGAEVLELEKGENTEDDEDGWESASLSEEEEEDGEWVDVHHSSDEEQQAIATKLDSMPMEERKAKAAAISTSRVLTQDDFQKIRMAQMKKEMDAAPGKAQKRKYLEIDSDEESRGELLSLRDIERLHKKPKSDKETRLATAMAGRTDRKEFVRKKTKINPFSSSTNKEKKKQKNFMMMRYSQNVRSKSARSFRDKQLALRDALLKKRKRMK</sequence>
<proteinExistence type="evidence at protein level"/>
<name>SDA1_MOUSE</name>
<reference key="1">
    <citation type="journal article" date="2005" name="Science">
        <title>The transcriptional landscape of the mammalian genome.</title>
        <authorList>
            <person name="Carninci P."/>
            <person name="Kasukawa T."/>
            <person name="Katayama S."/>
            <person name="Gough J."/>
            <person name="Frith M.C."/>
            <person name="Maeda N."/>
            <person name="Oyama R."/>
            <person name="Ravasi T."/>
            <person name="Lenhard B."/>
            <person name="Wells C."/>
            <person name="Kodzius R."/>
            <person name="Shimokawa K."/>
            <person name="Bajic V.B."/>
            <person name="Brenner S.E."/>
            <person name="Batalov S."/>
            <person name="Forrest A.R."/>
            <person name="Zavolan M."/>
            <person name="Davis M.J."/>
            <person name="Wilming L.G."/>
            <person name="Aidinis V."/>
            <person name="Allen J.E."/>
            <person name="Ambesi-Impiombato A."/>
            <person name="Apweiler R."/>
            <person name="Aturaliya R.N."/>
            <person name="Bailey T.L."/>
            <person name="Bansal M."/>
            <person name="Baxter L."/>
            <person name="Beisel K.W."/>
            <person name="Bersano T."/>
            <person name="Bono H."/>
            <person name="Chalk A.M."/>
            <person name="Chiu K.P."/>
            <person name="Choudhary V."/>
            <person name="Christoffels A."/>
            <person name="Clutterbuck D.R."/>
            <person name="Crowe M.L."/>
            <person name="Dalla E."/>
            <person name="Dalrymple B.P."/>
            <person name="de Bono B."/>
            <person name="Della Gatta G."/>
            <person name="di Bernardo D."/>
            <person name="Down T."/>
            <person name="Engstrom P."/>
            <person name="Fagiolini M."/>
            <person name="Faulkner G."/>
            <person name="Fletcher C.F."/>
            <person name="Fukushima T."/>
            <person name="Furuno M."/>
            <person name="Futaki S."/>
            <person name="Gariboldi M."/>
            <person name="Georgii-Hemming P."/>
            <person name="Gingeras T.R."/>
            <person name="Gojobori T."/>
            <person name="Green R.E."/>
            <person name="Gustincich S."/>
            <person name="Harbers M."/>
            <person name="Hayashi Y."/>
            <person name="Hensch T.K."/>
            <person name="Hirokawa N."/>
            <person name="Hill D."/>
            <person name="Huminiecki L."/>
            <person name="Iacono M."/>
            <person name="Ikeo K."/>
            <person name="Iwama A."/>
            <person name="Ishikawa T."/>
            <person name="Jakt M."/>
            <person name="Kanapin A."/>
            <person name="Katoh M."/>
            <person name="Kawasawa Y."/>
            <person name="Kelso J."/>
            <person name="Kitamura H."/>
            <person name="Kitano H."/>
            <person name="Kollias G."/>
            <person name="Krishnan S.P."/>
            <person name="Kruger A."/>
            <person name="Kummerfeld S.K."/>
            <person name="Kurochkin I.V."/>
            <person name="Lareau L.F."/>
            <person name="Lazarevic D."/>
            <person name="Lipovich L."/>
            <person name="Liu J."/>
            <person name="Liuni S."/>
            <person name="McWilliam S."/>
            <person name="Madan Babu M."/>
            <person name="Madera M."/>
            <person name="Marchionni L."/>
            <person name="Matsuda H."/>
            <person name="Matsuzawa S."/>
            <person name="Miki H."/>
            <person name="Mignone F."/>
            <person name="Miyake S."/>
            <person name="Morris K."/>
            <person name="Mottagui-Tabar S."/>
            <person name="Mulder N."/>
            <person name="Nakano N."/>
            <person name="Nakauchi H."/>
            <person name="Ng P."/>
            <person name="Nilsson R."/>
            <person name="Nishiguchi S."/>
            <person name="Nishikawa S."/>
            <person name="Nori F."/>
            <person name="Ohara O."/>
            <person name="Okazaki Y."/>
            <person name="Orlando V."/>
            <person name="Pang K.C."/>
            <person name="Pavan W.J."/>
            <person name="Pavesi G."/>
            <person name="Pesole G."/>
            <person name="Petrovsky N."/>
            <person name="Piazza S."/>
            <person name="Reed J."/>
            <person name="Reid J.F."/>
            <person name="Ring B.Z."/>
            <person name="Ringwald M."/>
            <person name="Rost B."/>
            <person name="Ruan Y."/>
            <person name="Salzberg S.L."/>
            <person name="Sandelin A."/>
            <person name="Schneider C."/>
            <person name="Schoenbach C."/>
            <person name="Sekiguchi K."/>
            <person name="Semple C.A."/>
            <person name="Seno S."/>
            <person name="Sessa L."/>
            <person name="Sheng Y."/>
            <person name="Shibata Y."/>
            <person name="Shimada H."/>
            <person name="Shimada K."/>
            <person name="Silva D."/>
            <person name="Sinclair B."/>
            <person name="Sperling S."/>
            <person name="Stupka E."/>
            <person name="Sugiura K."/>
            <person name="Sultana R."/>
            <person name="Takenaka Y."/>
            <person name="Taki K."/>
            <person name="Tammoja K."/>
            <person name="Tan S.L."/>
            <person name="Tang S."/>
            <person name="Taylor M.S."/>
            <person name="Tegner J."/>
            <person name="Teichmann S.A."/>
            <person name="Ueda H.R."/>
            <person name="van Nimwegen E."/>
            <person name="Verardo R."/>
            <person name="Wei C.L."/>
            <person name="Yagi K."/>
            <person name="Yamanishi H."/>
            <person name="Zabarovsky E."/>
            <person name="Zhu S."/>
            <person name="Zimmer A."/>
            <person name="Hide W."/>
            <person name="Bult C."/>
            <person name="Grimmond S.M."/>
            <person name="Teasdale R.D."/>
            <person name="Liu E.T."/>
            <person name="Brusic V."/>
            <person name="Quackenbush J."/>
            <person name="Wahlestedt C."/>
            <person name="Mattick J.S."/>
            <person name="Hume D.A."/>
            <person name="Kai C."/>
            <person name="Sasaki D."/>
            <person name="Tomaru Y."/>
            <person name="Fukuda S."/>
            <person name="Kanamori-Katayama M."/>
            <person name="Suzuki M."/>
            <person name="Aoki J."/>
            <person name="Arakawa T."/>
            <person name="Iida J."/>
            <person name="Imamura K."/>
            <person name="Itoh M."/>
            <person name="Kato T."/>
            <person name="Kawaji H."/>
            <person name="Kawagashira N."/>
            <person name="Kawashima T."/>
            <person name="Kojima M."/>
            <person name="Kondo S."/>
            <person name="Konno H."/>
            <person name="Nakano K."/>
            <person name="Ninomiya N."/>
            <person name="Nishio T."/>
            <person name="Okada M."/>
            <person name="Plessy C."/>
            <person name="Shibata K."/>
            <person name="Shiraki T."/>
            <person name="Suzuki S."/>
            <person name="Tagami M."/>
            <person name="Waki K."/>
            <person name="Watahiki A."/>
            <person name="Okamura-Oho Y."/>
            <person name="Suzuki H."/>
            <person name="Kawai J."/>
            <person name="Hayashizaki Y."/>
        </authorList>
    </citation>
    <scope>NUCLEOTIDE SEQUENCE [LARGE SCALE MRNA] (ISOFORMS 1 AND 3)</scope>
    <scope>NUCLEOTIDE SEQUENCE [LARGE SCALE MRNA] OF 1-641 (ISOFORM 2)</scope>
    <source>
        <strain>C57BL/6J</strain>
        <tissue>Lung</tissue>
        <tissue>Testis</tissue>
    </source>
</reference>
<reference key="2">
    <citation type="journal article" date="2004" name="Genome Res.">
        <title>The status, quality, and expansion of the NIH full-length cDNA project: the Mammalian Gene Collection (MGC).</title>
        <authorList>
            <consortium name="The MGC Project Team"/>
        </authorList>
    </citation>
    <scope>NUCLEOTIDE SEQUENCE [LARGE SCALE MRNA] (ISOFORM 1)</scope>
    <source>
        <strain>FVB/N</strain>
        <tissue>Mammary tumor</tissue>
    </source>
</reference>
<reference key="3">
    <citation type="journal article" date="2007" name="Proc. Natl. Acad. Sci. U.S.A.">
        <title>Large-scale phosphorylation analysis of mouse liver.</title>
        <authorList>
            <person name="Villen J."/>
            <person name="Beausoleil S.A."/>
            <person name="Gerber S.A."/>
            <person name="Gygi S.P."/>
        </authorList>
    </citation>
    <scope>PHOSPHORYLATION [LARGE SCALE ANALYSIS] AT SER-585</scope>
    <scope>IDENTIFICATION BY MASS SPECTROMETRY [LARGE SCALE ANALYSIS]</scope>
    <source>
        <tissue>Liver</tissue>
    </source>
</reference>
<reference key="4">
    <citation type="journal article" date="2009" name="Immunity">
        <title>The phagosomal proteome in interferon-gamma-activated macrophages.</title>
        <authorList>
            <person name="Trost M."/>
            <person name="English L."/>
            <person name="Lemieux S."/>
            <person name="Courcelles M."/>
            <person name="Desjardins M."/>
            <person name="Thibault P."/>
        </authorList>
    </citation>
    <scope>PHOSPHORYLATION [LARGE SCALE ANALYSIS] AT SER-585</scope>
    <scope>IDENTIFICATION BY MASS SPECTROMETRY [LARGE SCALE ANALYSIS]</scope>
</reference>
<reference key="5">
    <citation type="journal article" date="2010" name="Cell">
        <title>A tissue-specific atlas of mouse protein phosphorylation and expression.</title>
        <authorList>
            <person name="Huttlin E.L."/>
            <person name="Jedrychowski M.P."/>
            <person name="Elias J.E."/>
            <person name="Goswami T."/>
            <person name="Rad R."/>
            <person name="Beausoleil S.A."/>
            <person name="Villen J."/>
            <person name="Haas W."/>
            <person name="Sowa M.E."/>
            <person name="Gygi S.P."/>
        </authorList>
    </citation>
    <scope>PHOSPHORYLATION [LARGE SCALE ANALYSIS] AT SER-585 AND SER-589</scope>
    <scope>IDENTIFICATION BY MASS SPECTROMETRY [LARGE SCALE ANALYSIS]</scope>
    <source>
        <tissue>Heart</tissue>
        <tissue>Kidney</tissue>
        <tissue>Lung</tissue>
        <tissue>Spleen</tissue>
    </source>
</reference>
<dbReference type="EMBL" id="AK029881">
    <property type="protein sequence ID" value="BAC26657.1"/>
    <property type="molecule type" value="mRNA"/>
</dbReference>
<dbReference type="EMBL" id="AK160646">
    <property type="protein sequence ID" value="BAE35938.1"/>
    <property type="molecule type" value="mRNA"/>
</dbReference>
<dbReference type="EMBL" id="AK164608">
    <property type="protein sequence ID" value="BAE37846.1"/>
    <property type="molecule type" value="mRNA"/>
</dbReference>
<dbReference type="EMBL" id="BC005751">
    <property type="protein sequence ID" value="AAH05751.1"/>
    <property type="molecule type" value="mRNA"/>
</dbReference>
<dbReference type="EMBL" id="BC042708">
    <property type="protein sequence ID" value="AAH42708.1"/>
    <property type="molecule type" value="mRNA"/>
</dbReference>
<dbReference type="CCDS" id="CCDS19429.1">
    <molecule id="Q80UZ2-1"/>
</dbReference>
<dbReference type="RefSeq" id="NP_766301.1">
    <property type="nucleotide sequence ID" value="NM_172713.2"/>
</dbReference>
<dbReference type="SMR" id="Q80UZ2"/>
<dbReference type="BioGRID" id="231123">
    <property type="interactions" value="39"/>
</dbReference>
<dbReference type="FunCoup" id="Q80UZ2">
    <property type="interactions" value="2774"/>
</dbReference>
<dbReference type="STRING" id="10090.ENSMUSP00000031364"/>
<dbReference type="GlyGen" id="Q80UZ2">
    <property type="glycosylation" value="2 sites, 1 O-linked glycan (1 site)"/>
</dbReference>
<dbReference type="iPTMnet" id="Q80UZ2"/>
<dbReference type="PhosphoSitePlus" id="Q80UZ2"/>
<dbReference type="jPOST" id="Q80UZ2"/>
<dbReference type="PaxDb" id="10090-ENSMUSP00000031364"/>
<dbReference type="PeptideAtlas" id="Q80UZ2"/>
<dbReference type="ProteomicsDB" id="255503">
    <molecule id="Q80UZ2-1"/>
</dbReference>
<dbReference type="ProteomicsDB" id="255504">
    <molecule id="Q80UZ2-2"/>
</dbReference>
<dbReference type="ProteomicsDB" id="255505">
    <molecule id="Q80UZ2-3"/>
</dbReference>
<dbReference type="Pumba" id="Q80UZ2"/>
<dbReference type="GeneID" id="231452"/>
<dbReference type="KEGG" id="mmu:231452"/>
<dbReference type="UCSC" id="uc008yct.1">
    <molecule id="Q80UZ2-1"/>
    <property type="organism name" value="mouse"/>
</dbReference>
<dbReference type="UCSC" id="uc008ycu.1">
    <molecule id="Q80UZ2-3"/>
    <property type="organism name" value="mouse"/>
</dbReference>
<dbReference type="UCSC" id="uc012dyp.1">
    <molecule id="Q80UZ2-2"/>
    <property type="organism name" value="mouse"/>
</dbReference>
<dbReference type="AGR" id="MGI:2140779"/>
<dbReference type="CTD" id="55153"/>
<dbReference type="MGI" id="MGI:2140779">
    <property type="gene designation" value="Sdad1"/>
</dbReference>
<dbReference type="eggNOG" id="KOG2229">
    <property type="taxonomic scope" value="Eukaryota"/>
</dbReference>
<dbReference type="InParanoid" id="Q80UZ2"/>
<dbReference type="OrthoDB" id="2196187at2759"/>
<dbReference type="PhylomeDB" id="Q80UZ2"/>
<dbReference type="TreeFam" id="TF105727"/>
<dbReference type="BioGRID-ORCS" id="231452">
    <property type="hits" value="25 hits in 75 CRISPR screens"/>
</dbReference>
<dbReference type="PRO" id="PR:Q80UZ2"/>
<dbReference type="Proteomes" id="UP000000589">
    <property type="component" value="Unplaced"/>
</dbReference>
<dbReference type="RNAct" id="Q80UZ2">
    <property type="molecule type" value="protein"/>
</dbReference>
<dbReference type="GO" id="GO:0005730">
    <property type="term" value="C:nucleolus"/>
    <property type="evidence" value="ECO:0000250"/>
    <property type="project" value="UniProtKB"/>
</dbReference>
<dbReference type="GO" id="GO:1990830">
    <property type="term" value="P:cellular response to leukemia inhibitory factor"/>
    <property type="evidence" value="ECO:0000270"/>
    <property type="project" value="MGI"/>
</dbReference>
<dbReference type="GO" id="GO:0015031">
    <property type="term" value="P:protein transport"/>
    <property type="evidence" value="ECO:0007669"/>
    <property type="project" value="UniProtKB-KW"/>
</dbReference>
<dbReference type="GO" id="GO:0042273">
    <property type="term" value="P:ribosomal large subunit biogenesis"/>
    <property type="evidence" value="ECO:0007669"/>
    <property type="project" value="InterPro"/>
</dbReference>
<dbReference type="GO" id="GO:0000055">
    <property type="term" value="P:ribosomal large subunit export from nucleus"/>
    <property type="evidence" value="ECO:0007669"/>
    <property type="project" value="InterPro"/>
</dbReference>
<dbReference type="InterPro" id="IPR016024">
    <property type="entry name" value="ARM-type_fold"/>
</dbReference>
<dbReference type="InterPro" id="IPR027312">
    <property type="entry name" value="Sda1"/>
</dbReference>
<dbReference type="InterPro" id="IPR048292">
    <property type="entry name" value="SDA1_C"/>
</dbReference>
<dbReference type="InterPro" id="IPR007949">
    <property type="entry name" value="SDA1_MD"/>
</dbReference>
<dbReference type="InterPro" id="IPR012977">
    <property type="entry name" value="SDA1_N"/>
</dbReference>
<dbReference type="PANTHER" id="PTHR12730">
    <property type="entry name" value="HSDA/SDA1-RELATED"/>
    <property type="match status" value="1"/>
</dbReference>
<dbReference type="PANTHER" id="PTHR12730:SF0">
    <property type="entry name" value="PROTEIN SDA1 HOMOLOG"/>
    <property type="match status" value="1"/>
</dbReference>
<dbReference type="Pfam" id="PF21638">
    <property type="entry name" value="SDA1_C"/>
    <property type="match status" value="1"/>
</dbReference>
<dbReference type="Pfam" id="PF05285">
    <property type="entry name" value="SDA1_dom"/>
    <property type="match status" value="1"/>
</dbReference>
<dbReference type="Pfam" id="PF08158">
    <property type="entry name" value="SDA1_HEAT"/>
    <property type="match status" value="1"/>
</dbReference>
<dbReference type="SUPFAM" id="SSF48371">
    <property type="entry name" value="ARM repeat"/>
    <property type="match status" value="1"/>
</dbReference>
<accession>Q80UZ2</accession>
<accession>Q3TP91</accession>
<accession>Q3TUN3</accession>
<accession>Q8CDL7</accession>
<accession>Q99JQ4</accession>
<evidence type="ECO:0000250" key="1"/>
<evidence type="ECO:0000250" key="2">
    <source>
        <dbReference type="UniProtKB" id="Q9NVU7"/>
    </source>
</evidence>
<evidence type="ECO:0000255" key="3"/>
<evidence type="ECO:0000256" key="4">
    <source>
        <dbReference type="SAM" id="MobiDB-lite"/>
    </source>
</evidence>
<evidence type="ECO:0000303" key="5">
    <source>
    </source>
</evidence>
<evidence type="ECO:0000305" key="6"/>
<evidence type="ECO:0007744" key="7">
    <source>
    </source>
</evidence>
<evidence type="ECO:0007744" key="8">
    <source>
    </source>
</evidence>
<evidence type="ECO:0007744" key="9">
    <source>
    </source>
</evidence>